<dbReference type="EMBL" id="CP000554">
    <property type="protein sequence ID" value="ABM77293.1"/>
    <property type="molecule type" value="Genomic_DNA"/>
</dbReference>
<dbReference type="RefSeq" id="WP_011825215.1">
    <property type="nucleotide sequence ID" value="NC_008820.1"/>
</dbReference>
<dbReference type="SMR" id="A2C733"/>
<dbReference type="STRING" id="59922.P9303_05411"/>
<dbReference type="KEGG" id="pmf:P9303_05411"/>
<dbReference type="HOGENOM" id="CLU_061463_6_0_3"/>
<dbReference type="BioCyc" id="PMAR59922:G1G80-497-MONOMER"/>
<dbReference type="Proteomes" id="UP000002274">
    <property type="component" value="Chromosome"/>
</dbReference>
<dbReference type="GO" id="GO:0005737">
    <property type="term" value="C:cytoplasm"/>
    <property type="evidence" value="ECO:0007669"/>
    <property type="project" value="UniProtKB-ARBA"/>
</dbReference>
<dbReference type="GO" id="GO:1990904">
    <property type="term" value="C:ribonucleoprotein complex"/>
    <property type="evidence" value="ECO:0007669"/>
    <property type="project" value="UniProtKB-KW"/>
</dbReference>
<dbReference type="GO" id="GO:0005840">
    <property type="term" value="C:ribosome"/>
    <property type="evidence" value="ECO:0007669"/>
    <property type="project" value="UniProtKB-KW"/>
</dbReference>
<dbReference type="GO" id="GO:0019843">
    <property type="term" value="F:rRNA binding"/>
    <property type="evidence" value="ECO:0007669"/>
    <property type="project" value="UniProtKB-UniRule"/>
</dbReference>
<dbReference type="GO" id="GO:0003735">
    <property type="term" value="F:structural constituent of ribosome"/>
    <property type="evidence" value="ECO:0007669"/>
    <property type="project" value="InterPro"/>
</dbReference>
<dbReference type="GO" id="GO:0006412">
    <property type="term" value="P:translation"/>
    <property type="evidence" value="ECO:0007669"/>
    <property type="project" value="UniProtKB-UniRule"/>
</dbReference>
<dbReference type="HAMAP" id="MF_01363">
    <property type="entry name" value="Ribosomal_bL21"/>
    <property type="match status" value="1"/>
</dbReference>
<dbReference type="InterPro" id="IPR028909">
    <property type="entry name" value="bL21-like"/>
</dbReference>
<dbReference type="InterPro" id="IPR036164">
    <property type="entry name" value="bL21-like_sf"/>
</dbReference>
<dbReference type="InterPro" id="IPR001787">
    <property type="entry name" value="Ribosomal_bL21"/>
</dbReference>
<dbReference type="InterPro" id="IPR018258">
    <property type="entry name" value="Ribosomal_bL21_CS"/>
</dbReference>
<dbReference type="NCBIfam" id="TIGR00061">
    <property type="entry name" value="L21"/>
    <property type="match status" value="1"/>
</dbReference>
<dbReference type="PANTHER" id="PTHR21349">
    <property type="entry name" value="50S RIBOSOMAL PROTEIN L21"/>
    <property type="match status" value="1"/>
</dbReference>
<dbReference type="PANTHER" id="PTHR21349:SF0">
    <property type="entry name" value="LARGE RIBOSOMAL SUBUNIT PROTEIN BL21M"/>
    <property type="match status" value="1"/>
</dbReference>
<dbReference type="Pfam" id="PF00829">
    <property type="entry name" value="Ribosomal_L21p"/>
    <property type="match status" value="1"/>
</dbReference>
<dbReference type="SUPFAM" id="SSF141091">
    <property type="entry name" value="L21p-like"/>
    <property type="match status" value="1"/>
</dbReference>
<dbReference type="PROSITE" id="PS01169">
    <property type="entry name" value="RIBOSOMAL_L21"/>
    <property type="match status" value="1"/>
</dbReference>
<keyword id="KW-0687">Ribonucleoprotein</keyword>
<keyword id="KW-0689">Ribosomal protein</keyword>
<keyword id="KW-0694">RNA-binding</keyword>
<keyword id="KW-0699">rRNA-binding</keyword>
<protein>
    <recommendedName>
        <fullName evidence="1">Large ribosomal subunit protein bL21</fullName>
    </recommendedName>
    <alternativeName>
        <fullName evidence="3">50S ribosomal protein L21</fullName>
    </alternativeName>
</protein>
<gene>
    <name evidence="1" type="primary">rplU</name>
    <name evidence="1" type="synonym">rpl21</name>
    <name type="ordered locus">P9303_05411</name>
</gene>
<accession>A2C733</accession>
<comment type="function">
    <text evidence="1">This protein binds to 23S rRNA in the presence of protein L20.</text>
</comment>
<comment type="subunit">
    <text evidence="1">Part of the 50S ribosomal subunit. Contacts protein L20.</text>
</comment>
<comment type="similarity">
    <text evidence="1">Belongs to the bacterial ribosomal protein bL21 family.</text>
</comment>
<evidence type="ECO:0000255" key="1">
    <source>
        <dbReference type="HAMAP-Rule" id="MF_01363"/>
    </source>
</evidence>
<evidence type="ECO:0000256" key="2">
    <source>
        <dbReference type="SAM" id="MobiDB-lite"/>
    </source>
</evidence>
<evidence type="ECO:0000305" key="3"/>
<reference key="1">
    <citation type="journal article" date="2007" name="PLoS Genet.">
        <title>Patterns and implications of gene gain and loss in the evolution of Prochlorococcus.</title>
        <authorList>
            <person name="Kettler G.C."/>
            <person name="Martiny A.C."/>
            <person name="Huang K."/>
            <person name="Zucker J."/>
            <person name="Coleman M.L."/>
            <person name="Rodrigue S."/>
            <person name="Chen F."/>
            <person name="Lapidus A."/>
            <person name="Ferriera S."/>
            <person name="Johnson J."/>
            <person name="Steglich C."/>
            <person name="Church G.M."/>
            <person name="Richardson P."/>
            <person name="Chisholm S.W."/>
        </authorList>
    </citation>
    <scope>NUCLEOTIDE SEQUENCE [LARGE SCALE GENOMIC DNA]</scope>
    <source>
        <strain>MIT 9303</strain>
    </source>
</reference>
<feature type="chain" id="PRO_1000067874" description="Large ribosomal subunit protein bL21">
    <location>
        <begin position="1"/>
        <end position="133"/>
    </location>
</feature>
<feature type="region of interest" description="Disordered" evidence="2">
    <location>
        <begin position="1"/>
        <end position="22"/>
    </location>
</feature>
<name>RL21_PROM3</name>
<proteinExistence type="inferred from homology"/>
<sequence>MAEKPAAKPKAAAAKAEAKDQSDSYAIVEASGQQFWLQPNRYYDLDRLQAAVDDTVTLENVLLIKDGKNDTTVGQPYVKGASVELKVMDHRRGPKIIVYKMRPKKKTRRKNGHRQELTRVMVQSISIDGKALS</sequence>
<organism>
    <name type="scientific">Prochlorococcus marinus (strain MIT 9303)</name>
    <dbReference type="NCBI Taxonomy" id="59922"/>
    <lineage>
        <taxon>Bacteria</taxon>
        <taxon>Bacillati</taxon>
        <taxon>Cyanobacteriota</taxon>
        <taxon>Cyanophyceae</taxon>
        <taxon>Synechococcales</taxon>
        <taxon>Prochlorococcaceae</taxon>
        <taxon>Prochlorococcus</taxon>
    </lineage>
</organism>